<feature type="chain" id="PRO_0000154809" description="Large ribosomal subunit protein uL10">
    <location>
        <begin position="1"/>
        <end position="314"/>
    </location>
</feature>
<feature type="region of interest" description="Disordered" evidence="2">
    <location>
        <begin position="281"/>
        <end position="314"/>
    </location>
</feature>
<feature type="compositionally biased region" description="Basic and acidic residues" evidence="2">
    <location>
        <begin position="287"/>
        <end position="302"/>
    </location>
</feature>
<gene>
    <name evidence="1" type="primary">rpl10</name>
    <name evidence="1" type="synonym">rplP0</name>
    <name type="ordered locus">Ta0359</name>
</gene>
<proteinExistence type="inferred from homology"/>
<reference key="1">
    <citation type="journal article" date="2000" name="Nature">
        <title>The genome sequence of the thermoacidophilic scavenger Thermoplasma acidophilum.</title>
        <authorList>
            <person name="Ruepp A."/>
            <person name="Graml W."/>
            <person name="Santos-Martinez M.-L."/>
            <person name="Koretke K.K."/>
            <person name="Volker C."/>
            <person name="Mewes H.-W."/>
            <person name="Frishman D."/>
            <person name="Stocker S."/>
            <person name="Lupas A.N."/>
            <person name="Baumeister W."/>
        </authorList>
    </citation>
    <scope>NUCLEOTIDE SEQUENCE [LARGE SCALE GENOMIC DNA]</scope>
    <source>
        <strain>ATCC 25905 / DSM 1728 / JCM 9062 / NBRC 15155 / AMRC-C165</strain>
    </source>
</reference>
<sequence>MKEVSQQKKELVNEITQRIKASRSVAIVDTAGIRTRQIQDIRGKNRGKINLKVIKKTLLFKALENLGDEKLSKLKENSGGQIALLTSDLEPTEIYKIIESTFQKTAPRGGEIAPEDIVIQPMTTGFPPGPMMTEFQKVGLQTGVEKGKIAIKKETVFVKKGETIPKDKAKILEMLEIKPLEVGLQLLGLYSEGVVYSKEVLSLTPERIANDMAAAFSQAKAIAKSSMFFVDEVLRDLLAEAKIKADALALAGQFITEDNVKDFLVRANVNAIILNNVLNKGSTQETPEEKKEEAKKEEKSPDESISEGLGALFQ</sequence>
<evidence type="ECO:0000255" key="1">
    <source>
        <dbReference type="HAMAP-Rule" id="MF_00280"/>
    </source>
</evidence>
<evidence type="ECO:0000256" key="2">
    <source>
        <dbReference type="SAM" id="MobiDB-lite"/>
    </source>
</evidence>
<evidence type="ECO:0000305" key="3"/>
<organism>
    <name type="scientific">Thermoplasma acidophilum (strain ATCC 25905 / DSM 1728 / JCM 9062 / NBRC 15155 / AMRC-C165)</name>
    <dbReference type="NCBI Taxonomy" id="273075"/>
    <lineage>
        <taxon>Archaea</taxon>
        <taxon>Methanobacteriati</taxon>
        <taxon>Thermoplasmatota</taxon>
        <taxon>Thermoplasmata</taxon>
        <taxon>Thermoplasmatales</taxon>
        <taxon>Thermoplasmataceae</taxon>
        <taxon>Thermoplasma</taxon>
    </lineage>
</organism>
<name>RL10_THEAC</name>
<keyword id="KW-1185">Reference proteome</keyword>
<keyword id="KW-0687">Ribonucleoprotein</keyword>
<keyword id="KW-0689">Ribosomal protein</keyword>
<keyword id="KW-0694">RNA-binding</keyword>
<keyword id="KW-0699">rRNA-binding</keyword>
<accession>P57692</accession>
<protein>
    <recommendedName>
        <fullName evidence="1">Large ribosomal subunit protein uL10</fullName>
    </recommendedName>
    <alternativeName>
        <fullName evidence="3">50S ribosomal protein L10</fullName>
    </alternativeName>
    <alternativeName>
        <fullName evidence="1">Acidic ribosomal protein P0 homolog</fullName>
    </alternativeName>
</protein>
<comment type="function">
    <text evidence="1">Forms part of the ribosomal stalk, playing a central role in the interaction of the ribosome with GTP-bound translation factors.</text>
</comment>
<comment type="subunit">
    <text evidence="1">Part of the 50S ribosomal subunit. Forms part of the ribosomal stalk which helps the ribosome interact with GTP-bound translation factors. Forms a heptameric L10(L12)2(L12)2(L12)2 complex, where L10 forms an elongated spine to which the L12 dimers bind in a sequential fashion.</text>
</comment>
<comment type="similarity">
    <text evidence="1">Belongs to the universal ribosomal protein uL10 family.</text>
</comment>
<dbReference type="EMBL" id="AL445064">
    <property type="protein sequence ID" value="CAC11503.1"/>
    <property type="molecule type" value="Genomic_DNA"/>
</dbReference>
<dbReference type="RefSeq" id="WP_010900787.1">
    <property type="nucleotide sequence ID" value="NC_002578.1"/>
</dbReference>
<dbReference type="SMR" id="P57692"/>
<dbReference type="FunCoup" id="P57692">
    <property type="interactions" value="160"/>
</dbReference>
<dbReference type="STRING" id="273075.gene:9571577"/>
<dbReference type="PaxDb" id="273075-Ta0359"/>
<dbReference type="EnsemblBacteria" id="CAC11503">
    <property type="protein sequence ID" value="CAC11503"/>
    <property type="gene ID" value="CAC11503"/>
</dbReference>
<dbReference type="KEGG" id="tac:Ta0359"/>
<dbReference type="eggNOG" id="arCOG04288">
    <property type="taxonomic scope" value="Archaea"/>
</dbReference>
<dbReference type="HOGENOM" id="CLU_053173_0_0_2"/>
<dbReference type="InParanoid" id="P57692"/>
<dbReference type="OrthoDB" id="30930at2157"/>
<dbReference type="Proteomes" id="UP000001024">
    <property type="component" value="Chromosome"/>
</dbReference>
<dbReference type="GO" id="GO:0022625">
    <property type="term" value="C:cytosolic large ribosomal subunit"/>
    <property type="evidence" value="ECO:0007669"/>
    <property type="project" value="TreeGrafter"/>
</dbReference>
<dbReference type="GO" id="GO:0070180">
    <property type="term" value="F:large ribosomal subunit rRNA binding"/>
    <property type="evidence" value="ECO:0007669"/>
    <property type="project" value="UniProtKB-UniRule"/>
</dbReference>
<dbReference type="GO" id="GO:0003735">
    <property type="term" value="F:structural constituent of ribosome"/>
    <property type="evidence" value="ECO:0007669"/>
    <property type="project" value="TreeGrafter"/>
</dbReference>
<dbReference type="GO" id="GO:0002181">
    <property type="term" value="P:cytoplasmic translation"/>
    <property type="evidence" value="ECO:0007669"/>
    <property type="project" value="TreeGrafter"/>
</dbReference>
<dbReference type="GO" id="GO:0000027">
    <property type="term" value="P:ribosomal large subunit assembly"/>
    <property type="evidence" value="ECO:0007669"/>
    <property type="project" value="TreeGrafter"/>
</dbReference>
<dbReference type="CDD" id="cd05795">
    <property type="entry name" value="Ribosomal_P0_L10e"/>
    <property type="match status" value="1"/>
</dbReference>
<dbReference type="Gene3D" id="3.30.70.1730">
    <property type="match status" value="1"/>
</dbReference>
<dbReference type="Gene3D" id="3.90.105.20">
    <property type="match status" value="1"/>
</dbReference>
<dbReference type="Gene3D" id="6.10.140.760">
    <property type="match status" value="1"/>
</dbReference>
<dbReference type="HAMAP" id="MF_00280">
    <property type="entry name" value="Ribosomal_uL10_arch"/>
    <property type="match status" value="1"/>
</dbReference>
<dbReference type="InterPro" id="IPR050323">
    <property type="entry name" value="Ribosomal_protein_uL10"/>
</dbReference>
<dbReference type="InterPro" id="IPR001790">
    <property type="entry name" value="Ribosomal_uL10"/>
</dbReference>
<dbReference type="InterPro" id="IPR040637">
    <property type="entry name" value="Ribosomal_uL10-like_insert"/>
</dbReference>
<dbReference type="InterPro" id="IPR043164">
    <property type="entry name" value="Ribosomal_uL10-like_insert_sf"/>
</dbReference>
<dbReference type="InterPro" id="IPR043141">
    <property type="entry name" value="Ribosomal_uL10-like_sf"/>
</dbReference>
<dbReference type="InterPro" id="IPR022909">
    <property type="entry name" value="Ribosomal_uL10_arc"/>
</dbReference>
<dbReference type="NCBIfam" id="NF003100">
    <property type="entry name" value="PRK04019.2-3"/>
    <property type="match status" value="1"/>
</dbReference>
<dbReference type="PANTHER" id="PTHR45699">
    <property type="entry name" value="60S ACIDIC RIBOSOMAL PROTEIN P0"/>
    <property type="match status" value="1"/>
</dbReference>
<dbReference type="PANTHER" id="PTHR45699:SF3">
    <property type="entry name" value="LARGE RIBOSOMAL SUBUNIT PROTEIN UL10"/>
    <property type="match status" value="1"/>
</dbReference>
<dbReference type="Pfam" id="PF00466">
    <property type="entry name" value="Ribosomal_L10"/>
    <property type="match status" value="1"/>
</dbReference>
<dbReference type="Pfam" id="PF17777">
    <property type="entry name" value="RL10P_insert"/>
    <property type="match status" value="1"/>
</dbReference>
<dbReference type="SUPFAM" id="SSF160369">
    <property type="entry name" value="Ribosomal protein L10-like"/>
    <property type="match status" value="1"/>
</dbReference>